<sequence length="380" mass="42802">MTPTRKINPLMKLINHSFIDLPTPSNISTWWNFGSLLGACLILQITTGLFLAMHYSPDASTAFSSIAHITRDVNYGWIIRYLHANGASMLFICLFLHVGRGLYYGSFLYLETWNIGIILLLTTMATAFMGYVLPWGQMSFWGATVITNLLSAIPYIGTDLVQWVWGGYSVDSPTLTRFFTLHFILPFIITALTTLHLLFLHETGSNNPLGITSHSDKITFHPYYTTKDILGLFLFLLALMVLTLFSPDLLGDPDNYTLANPLITPPHIKPEWYFLFAYTILRSVPNKLGGVLALLLSILILAVIPILHTSKQQSMMFRPLSQLLYWLLATDLLILTWIGGQPVSYPFITIGQVASVLYFTTILILMPIISLIENKMLEWA</sequence>
<keyword id="KW-0249">Electron transport</keyword>
<keyword id="KW-0349">Heme</keyword>
<keyword id="KW-0408">Iron</keyword>
<keyword id="KW-0472">Membrane</keyword>
<keyword id="KW-0479">Metal-binding</keyword>
<keyword id="KW-0496">Mitochondrion</keyword>
<keyword id="KW-0999">Mitochondrion inner membrane</keyword>
<keyword id="KW-1185">Reference proteome</keyword>
<keyword id="KW-0679">Respiratory chain</keyword>
<keyword id="KW-0812">Transmembrane</keyword>
<keyword id="KW-1133">Transmembrane helix</keyword>
<keyword id="KW-0813">Transport</keyword>
<keyword id="KW-0830">Ubiquinone</keyword>
<proteinExistence type="inferred from homology"/>
<dbReference type="EMBL" id="D38116">
    <property type="protein sequence ID" value="BAA85302.1"/>
    <property type="molecule type" value="Genomic_DNA"/>
</dbReference>
<dbReference type="RefSeq" id="NP_008211.1">
    <property type="nucleotide sequence ID" value="NC_001644.1"/>
</dbReference>
<dbReference type="SMR" id="Q9T9W4"/>
<dbReference type="STRING" id="9597.ENSPPAP00000000013"/>
<dbReference type="Ensembl" id="ENSPPAT00000000035.1">
    <property type="protein sequence ID" value="ENSPPAP00000000013.1"/>
    <property type="gene ID" value="ENSPPAG00000000035.1"/>
</dbReference>
<dbReference type="GeneID" id="807882"/>
<dbReference type="KEGG" id="pps:807882"/>
<dbReference type="CTD" id="4519"/>
<dbReference type="GeneTree" id="ENSGT00390000017948"/>
<dbReference type="OMA" id="NISAWWN"/>
<dbReference type="Proteomes" id="UP000240080">
    <property type="component" value="Mitochondrion"/>
</dbReference>
<dbReference type="Bgee" id="ENSPPAG00000000035">
    <property type="expression patterns" value="Expressed in adult mammalian kidney and 6 other cell types or tissues"/>
</dbReference>
<dbReference type="GO" id="GO:0005743">
    <property type="term" value="C:mitochondrial inner membrane"/>
    <property type="evidence" value="ECO:0007669"/>
    <property type="project" value="UniProtKB-SubCell"/>
</dbReference>
<dbReference type="GO" id="GO:0045275">
    <property type="term" value="C:respiratory chain complex III"/>
    <property type="evidence" value="ECO:0007669"/>
    <property type="project" value="Ensembl"/>
</dbReference>
<dbReference type="GO" id="GO:0046872">
    <property type="term" value="F:metal ion binding"/>
    <property type="evidence" value="ECO:0007669"/>
    <property type="project" value="UniProtKB-KW"/>
</dbReference>
<dbReference type="GO" id="GO:0008121">
    <property type="term" value="F:ubiquinol-cytochrome-c reductase activity"/>
    <property type="evidence" value="ECO:0007669"/>
    <property type="project" value="InterPro"/>
</dbReference>
<dbReference type="GO" id="GO:0006122">
    <property type="term" value="P:mitochondrial electron transport, ubiquinol to cytochrome c"/>
    <property type="evidence" value="ECO:0007669"/>
    <property type="project" value="TreeGrafter"/>
</dbReference>
<dbReference type="CDD" id="cd00290">
    <property type="entry name" value="cytochrome_b_C"/>
    <property type="match status" value="1"/>
</dbReference>
<dbReference type="CDD" id="cd00284">
    <property type="entry name" value="Cytochrome_b_N"/>
    <property type="match status" value="1"/>
</dbReference>
<dbReference type="FunFam" id="1.20.810.10:FF:000002">
    <property type="entry name" value="Cytochrome b"/>
    <property type="match status" value="1"/>
</dbReference>
<dbReference type="Gene3D" id="1.20.810.10">
    <property type="entry name" value="Cytochrome Bc1 Complex, Chain C"/>
    <property type="match status" value="1"/>
</dbReference>
<dbReference type="InterPro" id="IPR005798">
    <property type="entry name" value="Cyt_b/b6_C"/>
</dbReference>
<dbReference type="InterPro" id="IPR036150">
    <property type="entry name" value="Cyt_b/b6_C_sf"/>
</dbReference>
<dbReference type="InterPro" id="IPR005797">
    <property type="entry name" value="Cyt_b/b6_N"/>
</dbReference>
<dbReference type="InterPro" id="IPR027387">
    <property type="entry name" value="Cytb/b6-like_sf"/>
</dbReference>
<dbReference type="InterPro" id="IPR030689">
    <property type="entry name" value="Cytochrome_b"/>
</dbReference>
<dbReference type="InterPro" id="IPR048260">
    <property type="entry name" value="Cytochrome_b_C_euk/bac"/>
</dbReference>
<dbReference type="InterPro" id="IPR048259">
    <property type="entry name" value="Cytochrome_b_N_euk/bac"/>
</dbReference>
<dbReference type="InterPro" id="IPR016174">
    <property type="entry name" value="Di-haem_cyt_TM"/>
</dbReference>
<dbReference type="PANTHER" id="PTHR19271">
    <property type="entry name" value="CYTOCHROME B"/>
    <property type="match status" value="1"/>
</dbReference>
<dbReference type="PANTHER" id="PTHR19271:SF16">
    <property type="entry name" value="CYTOCHROME B"/>
    <property type="match status" value="1"/>
</dbReference>
<dbReference type="Pfam" id="PF00032">
    <property type="entry name" value="Cytochrom_B_C"/>
    <property type="match status" value="1"/>
</dbReference>
<dbReference type="Pfam" id="PF00033">
    <property type="entry name" value="Cytochrome_B"/>
    <property type="match status" value="1"/>
</dbReference>
<dbReference type="PIRSF" id="PIRSF038885">
    <property type="entry name" value="COB"/>
    <property type="match status" value="1"/>
</dbReference>
<dbReference type="SUPFAM" id="SSF81648">
    <property type="entry name" value="a domain/subunit of cytochrome bc1 complex (Ubiquinol-cytochrome c reductase)"/>
    <property type="match status" value="1"/>
</dbReference>
<dbReference type="SUPFAM" id="SSF81342">
    <property type="entry name" value="Transmembrane di-heme cytochromes"/>
    <property type="match status" value="1"/>
</dbReference>
<dbReference type="PROSITE" id="PS51003">
    <property type="entry name" value="CYTB_CTER"/>
    <property type="match status" value="1"/>
</dbReference>
<dbReference type="PROSITE" id="PS51002">
    <property type="entry name" value="CYTB_NTER"/>
    <property type="match status" value="1"/>
</dbReference>
<accession>Q9T9W4</accession>
<name>CYB_PANPA</name>
<reference key="1">
    <citation type="journal article" date="1995" name="Proc. Natl. Acad. Sci. U.S.A.">
        <title>Recent African origin of modern humans revealed by complete sequences of hominoid mitochondrial DNAs.</title>
        <authorList>
            <person name="Horai S."/>
            <person name="Hayasaka K."/>
            <person name="Kondo R."/>
            <person name="Tsugane K."/>
            <person name="Takahata N."/>
        </authorList>
    </citation>
    <scope>NUCLEOTIDE SEQUENCE [GENOMIC DNA]</scope>
</reference>
<organism>
    <name type="scientific">Pan paniscus</name>
    <name type="common">Pygmy chimpanzee</name>
    <name type="synonym">Bonobo</name>
    <dbReference type="NCBI Taxonomy" id="9597"/>
    <lineage>
        <taxon>Eukaryota</taxon>
        <taxon>Metazoa</taxon>
        <taxon>Chordata</taxon>
        <taxon>Craniata</taxon>
        <taxon>Vertebrata</taxon>
        <taxon>Euteleostomi</taxon>
        <taxon>Mammalia</taxon>
        <taxon>Eutheria</taxon>
        <taxon>Euarchontoglires</taxon>
        <taxon>Primates</taxon>
        <taxon>Haplorrhini</taxon>
        <taxon>Catarrhini</taxon>
        <taxon>Hominidae</taxon>
        <taxon>Pan</taxon>
    </lineage>
</organism>
<evidence type="ECO:0000250" key="1"/>
<evidence type="ECO:0000250" key="2">
    <source>
        <dbReference type="UniProtKB" id="P00157"/>
    </source>
</evidence>
<evidence type="ECO:0000255" key="3">
    <source>
        <dbReference type="PROSITE-ProRule" id="PRU00967"/>
    </source>
</evidence>
<evidence type="ECO:0000255" key="4">
    <source>
        <dbReference type="PROSITE-ProRule" id="PRU00968"/>
    </source>
</evidence>
<protein>
    <recommendedName>
        <fullName>Cytochrome b</fullName>
    </recommendedName>
    <alternativeName>
        <fullName>Complex III subunit 3</fullName>
    </alternativeName>
    <alternativeName>
        <fullName>Complex III subunit III</fullName>
    </alternativeName>
    <alternativeName>
        <fullName>Cytochrome b-c1 complex subunit 3</fullName>
    </alternativeName>
    <alternativeName>
        <fullName>Ubiquinol-cytochrome-c reductase complex cytochrome b subunit</fullName>
    </alternativeName>
</protein>
<comment type="function">
    <text evidence="2">Component of the ubiquinol-cytochrome c reductase complex (complex III or cytochrome b-c1 complex) that is part of the mitochondrial respiratory chain. The b-c1 complex mediates electron transfer from ubiquinol to cytochrome c. Contributes to the generation of a proton gradient across the mitochondrial membrane that is then used for ATP synthesis.</text>
</comment>
<comment type="cofactor">
    <cofactor evidence="2">
        <name>heme b</name>
        <dbReference type="ChEBI" id="CHEBI:60344"/>
    </cofactor>
    <text evidence="2">Binds 2 heme b groups non-covalently.</text>
</comment>
<comment type="subunit">
    <text evidence="2">The cytochrome bc1 complex contains 11 subunits: 3 respiratory subunits (MT-CYB, CYC1 and UQCRFS1), 2 core proteins (UQCRC1 and UQCRC2) and 6 low-molecular weight proteins (UQCRH/QCR6, UQCRB/QCR7, UQCRQ/QCR8, UQCR10/QCR9, UQCR11/QCR10 and a cleavage product of UQCRFS1). This cytochrome bc1 complex then forms a dimer.</text>
</comment>
<comment type="subcellular location">
    <subcellularLocation>
        <location evidence="2">Mitochondrion inner membrane</location>
        <topology evidence="2">Multi-pass membrane protein</topology>
    </subcellularLocation>
</comment>
<comment type="miscellaneous">
    <text evidence="1">Heme 1 (or BL or b562) is low-potential and absorbs at about 562 nm, and heme 2 (or BH or b566) is high-potential and absorbs at about 566 nm.</text>
</comment>
<comment type="similarity">
    <text evidence="3 4">Belongs to the cytochrome b family.</text>
</comment>
<comment type="caution">
    <text evidence="2">The full-length protein contains only eight transmembrane helices, not nine as predicted by bioinformatics tools.</text>
</comment>
<feature type="chain" id="PRO_0000061341" description="Cytochrome b">
    <location>
        <begin position="1"/>
        <end position="380"/>
    </location>
</feature>
<feature type="transmembrane region" description="Helical" evidence="2">
    <location>
        <begin position="33"/>
        <end position="53"/>
    </location>
</feature>
<feature type="transmembrane region" description="Helical" evidence="2">
    <location>
        <begin position="77"/>
        <end position="98"/>
    </location>
</feature>
<feature type="transmembrane region" description="Helical" evidence="2">
    <location>
        <begin position="113"/>
        <end position="133"/>
    </location>
</feature>
<feature type="transmembrane region" description="Helical" evidence="2">
    <location>
        <begin position="178"/>
        <end position="198"/>
    </location>
</feature>
<feature type="transmembrane region" description="Helical" evidence="2">
    <location>
        <begin position="226"/>
        <end position="246"/>
    </location>
</feature>
<feature type="transmembrane region" description="Helical" evidence="2">
    <location>
        <begin position="288"/>
        <end position="308"/>
    </location>
</feature>
<feature type="transmembrane region" description="Helical" evidence="2">
    <location>
        <begin position="320"/>
        <end position="340"/>
    </location>
</feature>
<feature type="transmembrane region" description="Helical" evidence="2">
    <location>
        <begin position="347"/>
        <end position="367"/>
    </location>
</feature>
<feature type="binding site" description="axial binding residue" evidence="2">
    <location>
        <position position="83"/>
    </location>
    <ligand>
        <name>heme b</name>
        <dbReference type="ChEBI" id="CHEBI:60344"/>
        <label>b562</label>
    </ligand>
    <ligandPart>
        <name>Fe</name>
        <dbReference type="ChEBI" id="CHEBI:18248"/>
    </ligandPart>
</feature>
<feature type="binding site" description="axial binding residue" evidence="2">
    <location>
        <position position="97"/>
    </location>
    <ligand>
        <name>heme b</name>
        <dbReference type="ChEBI" id="CHEBI:60344"/>
        <label>b566</label>
    </ligand>
    <ligandPart>
        <name>Fe</name>
        <dbReference type="ChEBI" id="CHEBI:18248"/>
    </ligandPart>
</feature>
<feature type="binding site" description="axial binding residue" evidence="2">
    <location>
        <position position="182"/>
    </location>
    <ligand>
        <name>heme b</name>
        <dbReference type="ChEBI" id="CHEBI:60344"/>
        <label>b562</label>
    </ligand>
    <ligandPart>
        <name>Fe</name>
        <dbReference type="ChEBI" id="CHEBI:18248"/>
    </ligandPart>
</feature>
<feature type="binding site" description="axial binding residue" evidence="2">
    <location>
        <position position="196"/>
    </location>
    <ligand>
        <name>heme b</name>
        <dbReference type="ChEBI" id="CHEBI:60344"/>
        <label>b566</label>
    </ligand>
    <ligandPart>
        <name>Fe</name>
        <dbReference type="ChEBI" id="CHEBI:18248"/>
    </ligandPart>
</feature>
<feature type="binding site" evidence="2">
    <location>
        <position position="201"/>
    </location>
    <ligand>
        <name>a ubiquinone</name>
        <dbReference type="ChEBI" id="CHEBI:16389"/>
    </ligand>
</feature>
<geneLocation type="mitochondrion"/>
<gene>
    <name type="primary">MT-CYB</name>
    <name type="synonym">COB</name>
    <name type="synonym">CYTB</name>
    <name type="synonym">MTCYB</name>
</gene>